<organism>
    <name type="scientific">Homo sapiens</name>
    <name type="common">Human</name>
    <dbReference type="NCBI Taxonomy" id="9606"/>
    <lineage>
        <taxon>Eukaryota</taxon>
        <taxon>Metazoa</taxon>
        <taxon>Chordata</taxon>
        <taxon>Craniata</taxon>
        <taxon>Vertebrata</taxon>
        <taxon>Euteleostomi</taxon>
        <taxon>Mammalia</taxon>
        <taxon>Eutheria</taxon>
        <taxon>Euarchontoglires</taxon>
        <taxon>Primates</taxon>
        <taxon>Haplorrhini</taxon>
        <taxon>Catarrhini</taxon>
        <taxon>Hominidae</taxon>
        <taxon>Homo</taxon>
    </lineage>
</organism>
<keyword id="KW-0002">3D-structure</keyword>
<keyword id="KW-0090">Biological rhythms</keyword>
<keyword id="KW-0963">Cytoplasm</keyword>
<keyword id="KW-0217">Developmental protein</keyword>
<keyword id="KW-0539">Nucleus</keyword>
<keyword id="KW-0597">Phosphoprotein</keyword>
<keyword id="KW-1267">Proteomics identification</keyword>
<keyword id="KW-1185">Reference proteome</keyword>
<keyword id="KW-0678">Repressor</keyword>
<keyword id="KW-0804">Transcription</keyword>
<keyword id="KW-0805">Transcription regulation</keyword>
<keyword id="KW-0832">Ubl conjugation</keyword>
<feature type="chain" id="PRO_0000127240" description="DNA-binding protein inhibitor ID-2">
    <location>
        <begin position="1"/>
        <end position="134"/>
    </location>
</feature>
<feature type="domain" description="bHLH" evidence="4">
    <location>
        <begin position="23"/>
        <end position="75"/>
    </location>
</feature>
<feature type="short sequence motif" description="Nuclear export signal" evidence="1">
    <location>
        <begin position="106"/>
        <end position="115"/>
    </location>
</feature>
<feature type="modified residue" description="Phosphoserine" evidence="10 11">
    <location>
        <position position="14"/>
    </location>
</feature>
<feature type="modified residue" description="Phosphoserine" evidence="2">
    <location>
        <position position="25"/>
    </location>
</feature>
<feature type="sequence conflict" description="In Ref. 2; AAA58681." evidence="9" ref="2">
    <original>V</original>
    <variation>L</variation>
    <location>
        <position position="68"/>
    </location>
</feature>
<feature type="sequence conflict" description="In Ref. 2; AAA58681." evidence="9" ref="2">
    <original>A</original>
    <variation>R</variation>
    <location>
        <position position="98"/>
    </location>
</feature>
<feature type="helix" evidence="12">
    <location>
        <begin position="32"/>
        <end position="49"/>
    </location>
</feature>
<feature type="strand" evidence="12">
    <location>
        <begin position="55"/>
        <end position="57"/>
    </location>
</feature>
<feature type="helix" evidence="12">
    <location>
        <begin position="61"/>
        <end position="80"/>
    </location>
</feature>
<dbReference type="EMBL" id="D13891">
    <property type="protein sequence ID" value="BAA02990.1"/>
    <property type="molecule type" value="mRNA"/>
</dbReference>
<dbReference type="EMBL" id="M97796">
    <property type="protein sequence ID" value="AAA58681.1"/>
    <property type="molecule type" value="mRNA"/>
</dbReference>
<dbReference type="EMBL" id="BC030639">
    <property type="protein sequence ID" value="AAH30639.1"/>
    <property type="molecule type" value="mRNA"/>
</dbReference>
<dbReference type="CCDS" id="CCDS1659.1"/>
<dbReference type="PIR" id="A40227">
    <property type="entry name" value="A40227"/>
</dbReference>
<dbReference type="PIR" id="JC2007">
    <property type="entry name" value="JC2007"/>
</dbReference>
<dbReference type="RefSeq" id="NP_002157.2">
    <property type="nucleotide sequence ID" value="NM_002166.4"/>
</dbReference>
<dbReference type="PDB" id="4AYA">
    <property type="method" value="X-ray"/>
    <property type="resolution" value="2.10 A"/>
    <property type="chains" value="A/B=1-82"/>
</dbReference>
<dbReference type="PDBsum" id="4AYA"/>
<dbReference type="BMRB" id="Q02363"/>
<dbReference type="SMR" id="Q02363"/>
<dbReference type="BioGRID" id="109624">
    <property type="interactions" value="95"/>
</dbReference>
<dbReference type="DIP" id="DIP-46874N"/>
<dbReference type="ELM" id="Q02363"/>
<dbReference type="FunCoup" id="Q02363">
    <property type="interactions" value="1978"/>
</dbReference>
<dbReference type="IntAct" id="Q02363">
    <property type="interactions" value="64"/>
</dbReference>
<dbReference type="MINT" id="Q02363"/>
<dbReference type="STRING" id="9606.ENSP00000234091"/>
<dbReference type="GlyGen" id="Q02363">
    <property type="glycosylation" value="1 site, 1 O-linked glycan (1 site)"/>
</dbReference>
<dbReference type="iPTMnet" id="Q02363"/>
<dbReference type="PhosphoSitePlus" id="Q02363"/>
<dbReference type="BioMuta" id="ID2"/>
<dbReference type="DMDM" id="729806"/>
<dbReference type="jPOST" id="Q02363"/>
<dbReference type="MassIVE" id="Q02363"/>
<dbReference type="PaxDb" id="9606-ENSP00000234091"/>
<dbReference type="PeptideAtlas" id="Q02363"/>
<dbReference type="ProteomicsDB" id="58083"/>
<dbReference type="Pumba" id="Q02363"/>
<dbReference type="Antibodypedia" id="12350">
    <property type="antibodies" value="454 antibodies from 38 providers"/>
</dbReference>
<dbReference type="DNASU" id="3398"/>
<dbReference type="Ensembl" id="ENST00000234091.8">
    <property type="protein sequence ID" value="ENSP00000234091.4"/>
    <property type="gene ID" value="ENSG00000115738.10"/>
</dbReference>
<dbReference type="Ensembl" id="ENST00000331129.3">
    <property type="protein sequence ID" value="ENSP00000385465.2"/>
    <property type="gene ID" value="ENSG00000115738.10"/>
</dbReference>
<dbReference type="Ensembl" id="ENST00000396290.2">
    <property type="protein sequence ID" value="ENSP00000379585.1"/>
    <property type="gene ID" value="ENSG00000115738.10"/>
</dbReference>
<dbReference type="GeneID" id="3398"/>
<dbReference type="KEGG" id="hsa:3398"/>
<dbReference type="MANE-Select" id="ENST00000396290.2">
    <property type="protein sequence ID" value="ENSP00000379585.1"/>
    <property type="RefSeq nucleotide sequence ID" value="NM_002166.5"/>
    <property type="RefSeq protein sequence ID" value="NP_002157.2"/>
</dbReference>
<dbReference type="AGR" id="HGNC:5361"/>
<dbReference type="CTD" id="3398"/>
<dbReference type="DisGeNET" id="3398"/>
<dbReference type="GeneCards" id="ID2"/>
<dbReference type="HGNC" id="HGNC:5361">
    <property type="gene designation" value="ID2"/>
</dbReference>
<dbReference type="HPA" id="ENSG00000115738">
    <property type="expression patterns" value="Tissue enhanced (parathyroid)"/>
</dbReference>
<dbReference type="MIM" id="600386">
    <property type="type" value="gene"/>
</dbReference>
<dbReference type="neXtProt" id="NX_Q02363"/>
<dbReference type="OpenTargets" id="ENSG00000115738"/>
<dbReference type="PharmGKB" id="PA29609"/>
<dbReference type="VEuPathDB" id="HostDB:ENSG00000115738"/>
<dbReference type="eggNOG" id="ENOG502RZP5">
    <property type="taxonomic scope" value="Eukaryota"/>
</dbReference>
<dbReference type="GeneTree" id="ENSGT00940000156464"/>
<dbReference type="HOGENOM" id="CLU_116790_2_1_1"/>
<dbReference type="InParanoid" id="Q02363"/>
<dbReference type="OMA" id="FPTELMT"/>
<dbReference type="OrthoDB" id="10047910at2759"/>
<dbReference type="PAN-GO" id="Q02363">
    <property type="GO annotations" value="5 GO annotations based on evolutionary models"/>
</dbReference>
<dbReference type="PhylomeDB" id="Q02363"/>
<dbReference type="TreeFam" id="TF326217"/>
<dbReference type="PathwayCommons" id="Q02363"/>
<dbReference type="Reactome" id="R-HSA-9031628">
    <property type="pathway name" value="NGF-stimulated transcription"/>
</dbReference>
<dbReference type="SignaLink" id="Q02363"/>
<dbReference type="SIGNOR" id="Q02363"/>
<dbReference type="BioGRID-ORCS" id="3398">
    <property type="hits" value="26 hits in 1147 CRISPR screens"/>
</dbReference>
<dbReference type="ChiTaRS" id="ID2">
    <property type="organism name" value="human"/>
</dbReference>
<dbReference type="EvolutionaryTrace" id="Q02363"/>
<dbReference type="GeneWiki" id="ID2"/>
<dbReference type="GenomeRNAi" id="3398"/>
<dbReference type="Pharos" id="Q02363">
    <property type="development level" value="Tbio"/>
</dbReference>
<dbReference type="PRO" id="PR:Q02363"/>
<dbReference type="Proteomes" id="UP000005640">
    <property type="component" value="Chromosome 2"/>
</dbReference>
<dbReference type="RNAct" id="Q02363">
    <property type="molecule type" value="protein"/>
</dbReference>
<dbReference type="Bgee" id="ENSG00000115738">
    <property type="expression patterns" value="Expressed in popliteal artery and 207 other cell types or tissues"/>
</dbReference>
<dbReference type="ExpressionAtlas" id="Q02363">
    <property type="expression patterns" value="baseline and differential"/>
</dbReference>
<dbReference type="GO" id="GO:0005737">
    <property type="term" value="C:cytoplasm"/>
    <property type="evidence" value="ECO:0000314"/>
    <property type="project" value="UniProtKB"/>
</dbReference>
<dbReference type="GO" id="GO:0005829">
    <property type="term" value="C:cytosol"/>
    <property type="evidence" value="ECO:0000314"/>
    <property type="project" value="BHF-UCL"/>
</dbReference>
<dbReference type="GO" id="GO:0000791">
    <property type="term" value="C:euchromatin"/>
    <property type="evidence" value="ECO:0000250"/>
    <property type="project" value="ARUK-UCL"/>
</dbReference>
<dbReference type="GO" id="GO:0005654">
    <property type="term" value="C:nucleoplasm"/>
    <property type="evidence" value="ECO:0000304"/>
    <property type="project" value="Reactome"/>
</dbReference>
<dbReference type="GO" id="GO:0005634">
    <property type="term" value="C:nucleus"/>
    <property type="evidence" value="ECO:0000314"/>
    <property type="project" value="BHF-UCL"/>
</dbReference>
<dbReference type="GO" id="GO:0032991">
    <property type="term" value="C:protein-containing complex"/>
    <property type="evidence" value="ECO:0000250"/>
    <property type="project" value="UniProtKB"/>
</dbReference>
<dbReference type="GO" id="GO:0046983">
    <property type="term" value="F:protein dimerization activity"/>
    <property type="evidence" value="ECO:0007669"/>
    <property type="project" value="InterPro"/>
</dbReference>
<dbReference type="GO" id="GO:0061629">
    <property type="term" value="F:RNA polymerase II-specific DNA-binding transcription factor binding"/>
    <property type="evidence" value="ECO:0000250"/>
    <property type="project" value="ARUK-UCL"/>
</dbReference>
<dbReference type="GO" id="GO:0003714">
    <property type="term" value="F:transcription corepressor activity"/>
    <property type="evidence" value="ECO:0000318"/>
    <property type="project" value="GO_Central"/>
</dbReference>
<dbReference type="GO" id="GO:0140416">
    <property type="term" value="F:transcription regulator inhibitor activity"/>
    <property type="evidence" value="ECO:0000250"/>
    <property type="project" value="ARUK-UCL"/>
</dbReference>
<dbReference type="GO" id="GO:0044325">
    <property type="term" value="F:transmembrane transporter binding"/>
    <property type="evidence" value="ECO:0000353"/>
    <property type="project" value="BHF-UCL"/>
</dbReference>
<dbReference type="GO" id="GO:0060612">
    <property type="term" value="P:adipose tissue development"/>
    <property type="evidence" value="ECO:0007669"/>
    <property type="project" value="Ensembl"/>
</dbReference>
<dbReference type="GO" id="GO:0008344">
    <property type="term" value="P:adult locomotory behavior"/>
    <property type="evidence" value="ECO:0007669"/>
    <property type="project" value="Ensembl"/>
</dbReference>
<dbReference type="GO" id="GO:0048708">
    <property type="term" value="P:astrocyte differentiation"/>
    <property type="evidence" value="ECO:0007669"/>
    <property type="project" value="Ensembl"/>
</dbReference>
<dbReference type="GO" id="GO:0030183">
    <property type="term" value="P:B cell differentiation"/>
    <property type="evidence" value="ECO:0007669"/>
    <property type="project" value="Ensembl"/>
</dbReference>
<dbReference type="GO" id="GO:0003166">
    <property type="term" value="P:bundle of His development"/>
    <property type="evidence" value="ECO:0000250"/>
    <property type="project" value="BHF-UCL"/>
</dbReference>
<dbReference type="GO" id="GO:0048469">
    <property type="term" value="P:cell maturation"/>
    <property type="evidence" value="ECO:0007669"/>
    <property type="project" value="Ensembl"/>
</dbReference>
<dbReference type="GO" id="GO:0048667">
    <property type="term" value="P:cell morphogenesis involved in neuron differentiation"/>
    <property type="evidence" value="ECO:0007669"/>
    <property type="project" value="Ensembl"/>
</dbReference>
<dbReference type="GO" id="GO:0071285">
    <property type="term" value="P:cellular response to lithium ion"/>
    <property type="evidence" value="ECO:0007669"/>
    <property type="project" value="Ensembl"/>
</dbReference>
<dbReference type="GO" id="GO:0090398">
    <property type="term" value="P:cellular senescence"/>
    <property type="evidence" value="ECO:0000250"/>
    <property type="project" value="UniProtKB"/>
</dbReference>
<dbReference type="GO" id="GO:0032922">
    <property type="term" value="P:circadian regulation of gene expression"/>
    <property type="evidence" value="ECO:0000250"/>
    <property type="project" value="UniProtKB"/>
</dbReference>
<dbReference type="GO" id="GO:0007623">
    <property type="term" value="P:circadian rhythm"/>
    <property type="evidence" value="ECO:0000250"/>
    <property type="project" value="ARUK-UCL"/>
</dbReference>
<dbReference type="GO" id="GO:0071542">
    <property type="term" value="P:dopaminergic neuron differentiation"/>
    <property type="evidence" value="ECO:0007669"/>
    <property type="project" value="Ensembl"/>
</dbReference>
<dbReference type="GO" id="GO:0048557">
    <property type="term" value="P:embryonic digestive tract morphogenesis"/>
    <property type="evidence" value="ECO:0000250"/>
    <property type="project" value="UniProtKB"/>
</dbReference>
<dbReference type="GO" id="GO:0061031">
    <property type="term" value="P:endodermal digestive tract morphogenesis"/>
    <property type="evidence" value="ECO:0000250"/>
    <property type="project" value="UniProtKB"/>
</dbReference>
<dbReference type="GO" id="GO:0043153">
    <property type="term" value="P:entrainment of circadian clock by photoperiod"/>
    <property type="evidence" value="ECO:0000250"/>
    <property type="project" value="UniProtKB"/>
</dbReference>
<dbReference type="GO" id="GO:0043353">
    <property type="term" value="P:enucleate erythrocyte differentiation"/>
    <property type="evidence" value="ECO:0000250"/>
    <property type="project" value="ARUK-UCL"/>
</dbReference>
<dbReference type="GO" id="GO:0061030">
    <property type="term" value="P:epithelial cell differentiation involved in mammary gland alveolus development"/>
    <property type="evidence" value="ECO:0000250"/>
    <property type="project" value="UniProtKB"/>
</dbReference>
<dbReference type="GO" id="GO:0007507">
    <property type="term" value="P:heart development"/>
    <property type="evidence" value="ECO:0000250"/>
    <property type="project" value="BHF-UCL"/>
</dbReference>
<dbReference type="GO" id="GO:0045475">
    <property type="term" value="P:locomotor rhythm"/>
    <property type="evidence" value="ECO:0000250"/>
    <property type="project" value="UniProtKB"/>
</dbReference>
<dbReference type="GO" id="GO:0060749">
    <property type="term" value="P:mammary gland alveolus development"/>
    <property type="evidence" value="ECO:0000250"/>
    <property type="project" value="UniProtKB"/>
</dbReference>
<dbReference type="GO" id="GO:0033598">
    <property type="term" value="P:mammary gland epithelial cell proliferation"/>
    <property type="evidence" value="ECO:0000250"/>
    <property type="project" value="UniProtKB"/>
</dbReference>
<dbReference type="GO" id="GO:0003149">
    <property type="term" value="P:membranous septum morphogenesis"/>
    <property type="evidence" value="ECO:0007669"/>
    <property type="project" value="Ensembl"/>
</dbReference>
<dbReference type="GO" id="GO:0001656">
    <property type="term" value="P:metanephros development"/>
    <property type="evidence" value="ECO:0007669"/>
    <property type="project" value="Ensembl"/>
</dbReference>
<dbReference type="GO" id="GO:0001779">
    <property type="term" value="P:natural killer cell differentiation"/>
    <property type="evidence" value="ECO:0007669"/>
    <property type="project" value="Ensembl"/>
</dbReference>
<dbReference type="GO" id="GO:0045578">
    <property type="term" value="P:negative regulation of B cell differentiation"/>
    <property type="evidence" value="ECO:0000250"/>
    <property type="project" value="ARUK-UCL"/>
</dbReference>
<dbReference type="GO" id="GO:0043433">
    <property type="term" value="P:negative regulation of DNA-binding transcription factor activity"/>
    <property type="evidence" value="ECO:0000314"/>
    <property type="project" value="GDB"/>
</dbReference>
<dbReference type="GO" id="GO:0045892">
    <property type="term" value="P:negative regulation of DNA-templated transcription"/>
    <property type="evidence" value="ECO:0000314"/>
    <property type="project" value="GDB"/>
</dbReference>
<dbReference type="GO" id="GO:1904339">
    <property type="term" value="P:negative regulation of dopaminergic neuron differentiation"/>
    <property type="evidence" value="ECO:0007669"/>
    <property type="project" value="Ensembl"/>
</dbReference>
<dbReference type="GO" id="GO:0010629">
    <property type="term" value="P:negative regulation of gene expression"/>
    <property type="evidence" value="ECO:0000250"/>
    <property type="project" value="UniProtKB"/>
</dbReference>
<dbReference type="GO" id="GO:0051148">
    <property type="term" value="P:negative regulation of muscle cell differentiation"/>
    <property type="evidence" value="ECO:0000250"/>
    <property type="project" value="BHF-UCL"/>
</dbReference>
<dbReference type="GO" id="GO:0048715">
    <property type="term" value="P:negative regulation of oligodendrocyte differentiation"/>
    <property type="evidence" value="ECO:0007669"/>
    <property type="project" value="Ensembl"/>
</dbReference>
<dbReference type="GO" id="GO:0045668">
    <property type="term" value="P:negative regulation of osteoblast differentiation"/>
    <property type="evidence" value="ECO:0007669"/>
    <property type="project" value="Ensembl"/>
</dbReference>
<dbReference type="GO" id="GO:0000122">
    <property type="term" value="P:negative regulation of transcription by RNA polymerase II"/>
    <property type="evidence" value="ECO:0000250"/>
    <property type="project" value="ARUK-UCL"/>
</dbReference>
<dbReference type="GO" id="GO:0030182">
    <property type="term" value="P:neuron differentiation"/>
    <property type="evidence" value="ECO:0000318"/>
    <property type="project" value="GO_Central"/>
</dbReference>
<dbReference type="GO" id="GO:0048663">
    <property type="term" value="P:neuron fate commitment"/>
    <property type="evidence" value="ECO:0000250"/>
    <property type="project" value="UniProtKB"/>
</dbReference>
<dbReference type="GO" id="GO:0021772">
    <property type="term" value="P:olfactory bulb development"/>
    <property type="evidence" value="ECO:0000250"/>
    <property type="project" value="ARUK-UCL"/>
</dbReference>
<dbReference type="GO" id="GO:0014003">
    <property type="term" value="P:oligodendrocyte development"/>
    <property type="evidence" value="ECO:0007669"/>
    <property type="project" value="Ensembl"/>
</dbReference>
<dbReference type="GO" id="GO:0048541">
    <property type="term" value="P:Peyer's patch development"/>
    <property type="evidence" value="ECO:0007669"/>
    <property type="project" value="Ensembl"/>
</dbReference>
<dbReference type="GO" id="GO:0048711">
    <property type="term" value="P:positive regulation of astrocyte differentiation"/>
    <property type="evidence" value="ECO:0000250"/>
    <property type="project" value="ARUK-UCL"/>
</dbReference>
<dbReference type="GO" id="GO:0045777">
    <property type="term" value="P:positive regulation of blood pressure"/>
    <property type="evidence" value="ECO:0000250"/>
    <property type="project" value="UniProtKB"/>
</dbReference>
<dbReference type="GO" id="GO:0045893">
    <property type="term" value="P:positive regulation of DNA-templated transcription"/>
    <property type="evidence" value="ECO:0000250"/>
    <property type="project" value="UniProtKB"/>
</dbReference>
<dbReference type="GO" id="GO:0045648">
    <property type="term" value="P:positive regulation of erythrocyte differentiation"/>
    <property type="evidence" value="ECO:0007669"/>
    <property type="project" value="Ensembl"/>
</dbReference>
<dbReference type="GO" id="GO:0045600">
    <property type="term" value="P:positive regulation of fat cell differentiation"/>
    <property type="evidence" value="ECO:0000250"/>
    <property type="project" value="ARUK-UCL"/>
</dbReference>
<dbReference type="GO" id="GO:0010628">
    <property type="term" value="P:positive regulation of gene expression"/>
    <property type="evidence" value="ECO:0000250"/>
    <property type="project" value="UniProtKB"/>
</dbReference>
<dbReference type="GO" id="GO:0045651">
    <property type="term" value="P:positive regulation of macrophage differentiation"/>
    <property type="evidence" value="ECO:0000250"/>
    <property type="project" value="ARUK-UCL"/>
</dbReference>
<dbReference type="GO" id="GO:0048661">
    <property type="term" value="P:positive regulation of smooth muscle cell proliferation"/>
    <property type="evidence" value="ECO:0000250"/>
    <property type="project" value="UniProtKB"/>
</dbReference>
<dbReference type="GO" id="GO:0042752">
    <property type="term" value="P:regulation of circadian rhythm"/>
    <property type="evidence" value="ECO:0000250"/>
    <property type="project" value="UniProtKB"/>
</dbReference>
<dbReference type="GO" id="GO:2000045">
    <property type="term" value="P:regulation of G1/S transition of mitotic cell cycle"/>
    <property type="evidence" value="ECO:0000315"/>
    <property type="project" value="BHF-UCL"/>
</dbReference>
<dbReference type="GO" id="GO:0019216">
    <property type="term" value="P:regulation of lipid metabolic process"/>
    <property type="evidence" value="ECO:0000250"/>
    <property type="project" value="UniProtKB"/>
</dbReference>
<dbReference type="GO" id="GO:2000177">
    <property type="term" value="P:regulation of neural precursor cell proliferation"/>
    <property type="evidence" value="ECO:0000250"/>
    <property type="project" value="UniProtKB"/>
</dbReference>
<dbReference type="GO" id="GO:0045664">
    <property type="term" value="P:regulation of neuron differentiation"/>
    <property type="evidence" value="ECO:0000250"/>
    <property type="project" value="UniProtKB"/>
</dbReference>
<dbReference type="GO" id="GO:0006357">
    <property type="term" value="P:regulation of transcription by RNA polymerase II"/>
    <property type="evidence" value="ECO:0000315"/>
    <property type="project" value="BHF-UCL"/>
</dbReference>
<dbReference type="GO" id="GO:0001966">
    <property type="term" value="P:thigmotaxis"/>
    <property type="evidence" value="ECO:0007669"/>
    <property type="project" value="Ensembl"/>
</dbReference>
<dbReference type="GO" id="GO:0050872">
    <property type="term" value="P:white fat cell differentiation"/>
    <property type="evidence" value="ECO:0007669"/>
    <property type="project" value="Ensembl"/>
</dbReference>
<dbReference type="CDD" id="cd19692">
    <property type="entry name" value="bHLH_dnHLH_ID2"/>
    <property type="match status" value="1"/>
</dbReference>
<dbReference type="DisProt" id="DP02697"/>
<dbReference type="FunFam" id="4.10.280.10:FF:000055">
    <property type="entry name" value="DNA-binding protein inhibitor ID-2"/>
    <property type="match status" value="1"/>
</dbReference>
<dbReference type="Gene3D" id="4.10.280.10">
    <property type="entry name" value="Helix-loop-helix DNA-binding domain"/>
    <property type="match status" value="1"/>
</dbReference>
<dbReference type="InterPro" id="IPR011598">
    <property type="entry name" value="bHLH_dom"/>
</dbReference>
<dbReference type="InterPro" id="IPR026052">
    <property type="entry name" value="DNA-bd_prot-inh"/>
</dbReference>
<dbReference type="InterPro" id="IPR036638">
    <property type="entry name" value="HLH_DNA-bd_sf"/>
</dbReference>
<dbReference type="PANTHER" id="PTHR11723">
    <property type="entry name" value="DNA-BINDING PROTEIN INHIBITOR"/>
    <property type="match status" value="1"/>
</dbReference>
<dbReference type="PANTHER" id="PTHR11723:SF5">
    <property type="entry name" value="DNA-BINDING PROTEIN INHIBITOR ID-2"/>
    <property type="match status" value="1"/>
</dbReference>
<dbReference type="Pfam" id="PF00010">
    <property type="entry name" value="HLH"/>
    <property type="match status" value="1"/>
</dbReference>
<dbReference type="SMART" id="SM00353">
    <property type="entry name" value="HLH"/>
    <property type="match status" value="1"/>
</dbReference>
<dbReference type="SUPFAM" id="SSF47459">
    <property type="entry name" value="HLH, helix-loop-helix DNA-binding domain"/>
    <property type="match status" value="1"/>
</dbReference>
<dbReference type="PROSITE" id="PS50888">
    <property type="entry name" value="BHLH"/>
    <property type="match status" value="1"/>
</dbReference>
<sequence length="134" mass="14917">MKAFSPVRSVRKNSLSDHSLGISRSKTPVDDPMSLLYNMNDCYSKLKELVPSIPQNKKVSKMEILQHVIDYILDLQIALDSHPTIVSLHHQRPGQNQASRTPLTTLNTDISILSLQASEFPSELMSNDSKALCG</sequence>
<evidence type="ECO:0000250" key="1"/>
<evidence type="ECO:0000250" key="2">
    <source>
        <dbReference type="UniProtKB" id="P41136"/>
    </source>
</evidence>
<evidence type="ECO:0000250" key="3">
    <source>
        <dbReference type="UniProtKB" id="P41137"/>
    </source>
</evidence>
<evidence type="ECO:0000255" key="4">
    <source>
        <dbReference type="PROSITE-ProRule" id="PRU00981"/>
    </source>
</evidence>
<evidence type="ECO:0000269" key="5">
    <source>
    </source>
</evidence>
<evidence type="ECO:0000269" key="6">
    <source>
    </source>
</evidence>
<evidence type="ECO:0000269" key="7">
    <source>
    </source>
</evidence>
<evidence type="ECO:0000269" key="8">
    <source>
    </source>
</evidence>
<evidence type="ECO:0000305" key="9"/>
<evidence type="ECO:0007744" key="10">
    <source>
    </source>
</evidence>
<evidence type="ECO:0007744" key="11">
    <source>
    </source>
</evidence>
<evidence type="ECO:0007829" key="12">
    <source>
        <dbReference type="PDB" id="4AYA"/>
    </source>
</evidence>
<proteinExistence type="evidence at protein level"/>
<name>ID2_HUMAN</name>
<protein>
    <recommendedName>
        <fullName>DNA-binding protein inhibitor ID-2</fullName>
    </recommendedName>
    <alternativeName>
        <fullName>Class B basic helix-loop-helix protein 26</fullName>
        <shortName>bHLHb26</shortName>
    </alternativeName>
    <alternativeName>
        <fullName>Inhibitor of DNA binding 2</fullName>
    </alternativeName>
    <alternativeName>
        <fullName>Inhibitor of differentiation 2</fullName>
    </alternativeName>
</protein>
<accession>Q02363</accession>
<gene>
    <name type="primary">ID2</name>
    <name type="synonym">BHLHB26</name>
</gene>
<reference key="1">
    <citation type="journal article" date="1994" name="J. Biol. Chem.">
        <title>Id-related genes encoding helix-loop-helix proteins are required for G1 progression and are repressed in senescent human fibroblasts.</title>
        <authorList>
            <person name="Hara E."/>
            <person name="Yamaguchi T."/>
            <person name="Nojima H."/>
            <person name="Ide T."/>
            <person name="Campisi J."/>
            <person name="Okayama H."/>
            <person name="Oda K."/>
        </authorList>
    </citation>
    <scope>NUCLEOTIDE SEQUENCE [MRNA]</scope>
    <source>
        <tissue>Lung</tissue>
    </source>
</reference>
<reference key="2">
    <citation type="journal article" date="1992" name="Proc. Natl. Acad. Sci. U.S.A.">
        <title>A human Id-like helix-loop-helix protein expressed during early development.</title>
        <authorList>
            <person name="Biggs J."/>
            <person name="Murphy E.V."/>
            <person name="Israel M.A."/>
        </authorList>
    </citation>
    <scope>NUCLEOTIDE SEQUENCE [MRNA]</scope>
</reference>
<reference key="3">
    <citation type="journal article" date="2004" name="Genome Res.">
        <title>The status, quality, and expansion of the NIH full-length cDNA project: the Mammalian Gene Collection (MGC).</title>
        <authorList>
            <consortium name="The MGC Project Team"/>
        </authorList>
    </citation>
    <scope>NUCLEOTIDE SEQUENCE [LARGE SCALE MRNA]</scope>
    <source>
        <tissue>Hippocampus</tissue>
    </source>
</reference>
<reference key="4">
    <citation type="journal article" date="1999" name="Exp. Cell Res.">
        <title>Dimerization of the docking/adaptor protein HEF1 via a carboxy-terminal helix-loop-helix domain.</title>
        <authorList>
            <person name="Law S.F."/>
            <person name="Zhang Y.-Z."/>
            <person name="Fashena S.J."/>
            <person name="Toby G."/>
            <person name="Estojak J."/>
            <person name="Golemis E.A."/>
        </authorList>
    </citation>
    <scope>INTERACTION WITH NEDD9</scope>
</reference>
<reference key="5">
    <citation type="journal article" date="2004" name="Mol. Endocrinol.">
        <title>Orphan nuclear receptor small heterodimer partner, a novel corepressor for a basic helix-loop-helix transcription factor BETA2/neuroD.</title>
        <authorList>
            <person name="Kim J.Y."/>
            <person name="Chu K."/>
            <person name="Kim H.J."/>
            <person name="Seong H.A."/>
            <person name="Park K.C."/>
            <person name="Sanyal S."/>
            <person name="Takeda J."/>
            <person name="Ha H."/>
            <person name="Shong M."/>
            <person name="Tsai M.J."/>
            <person name="Choi H.S."/>
        </authorList>
    </citation>
    <scope>INTERACTION WITH NR0B2</scope>
</reference>
<reference key="6">
    <citation type="journal article" date="2010" name="J. Biol. Chem.">
        <title>The transcriptional repressor ID2 can interact with the canonical clock components CLOCK and BMAL1 and mediate inhibitory effects on mPer1 expression.</title>
        <authorList>
            <person name="Ward S.M."/>
            <person name="Fernando S.J."/>
            <person name="Hou T.Y."/>
            <person name="Duffield G.E."/>
        </authorList>
    </citation>
    <scope>FUNCTION</scope>
    <scope>SUBCELLULAR LOCATION</scope>
    <scope>INTERACTION WITH CLOCK AND BMAL1</scope>
</reference>
<reference key="7">
    <citation type="journal article" date="2013" name="J. Proteome Res.">
        <title>Toward a comprehensive characterization of a human cancer cell phosphoproteome.</title>
        <authorList>
            <person name="Zhou H."/>
            <person name="Di Palma S."/>
            <person name="Preisinger C."/>
            <person name="Peng M."/>
            <person name="Polat A.N."/>
            <person name="Heck A.J."/>
            <person name="Mohammed S."/>
        </authorList>
    </citation>
    <scope>PHOSPHORYLATION [LARGE SCALE ANALYSIS] AT SER-14</scope>
    <scope>IDENTIFICATION BY MASS SPECTROMETRY [LARGE SCALE ANALYSIS]</scope>
    <source>
        <tissue>Cervix carcinoma</tissue>
    </source>
</reference>
<reference key="8">
    <citation type="journal article" date="2014" name="J. Proteomics">
        <title>An enzyme assisted RP-RPLC approach for in-depth analysis of human liver phosphoproteome.</title>
        <authorList>
            <person name="Bian Y."/>
            <person name="Song C."/>
            <person name="Cheng K."/>
            <person name="Dong M."/>
            <person name="Wang F."/>
            <person name="Huang J."/>
            <person name="Sun D."/>
            <person name="Wang L."/>
            <person name="Ye M."/>
            <person name="Zou H."/>
        </authorList>
    </citation>
    <scope>PHOSPHORYLATION [LARGE SCALE ANALYSIS] AT SER-14</scope>
    <scope>IDENTIFICATION BY MASS SPECTROMETRY [LARGE SCALE ANALYSIS]</scope>
    <source>
        <tissue>Liver</tissue>
    </source>
</reference>
<reference key="9">
    <citation type="journal article" date="2014" name="PLoS ONE">
        <title>The ubiquitin ligase ASB4 promotes trophoblast differentiation through the degradation of ID2.</title>
        <authorList>
            <person name="Townley-Tilson W.H."/>
            <person name="Wu Y."/>
            <person name="Ferguson J.E. III"/>
            <person name="Patterson C."/>
        </authorList>
    </citation>
    <scope>INTERACTION WITH ASB4</scope>
    <scope>UBIQUITINATION</scope>
</reference>
<comment type="function">
    <text evidence="7">Transcriptional regulator (lacking a basic DNA binding domain) which negatively regulates the basic helix-loop-helix (bHLH) transcription factors by forming heterodimers and inhibiting their DNA binding and transcriptional activity. Implicated in regulating a variety of cellular processes, including cellular growth, senescence, differentiation, apoptosis, angiogenesis, and neoplastic transformation. Inhibits skeletal muscle and cardiac myocyte differentiation. Regulates the circadian clock by repressing the transcriptional activator activity of the CLOCK-BMAL1 heterodimer. Restricts the CLOCK and BMAL1 localization to the cytoplasm. Plays a role in both the input and output pathways of the circadian clock: in the input component, is involved in modulating the magnitude of photic entrainment and in the output component, contributes to the regulation of a variety of liver clock-controlled genes involved in lipid metabolism.</text>
</comment>
<comment type="subunit">
    <text evidence="2 5 6 7 8">Interacts with GATA4 and NKX2-5 (By similarity). Interacts with NR0B2 (PubMed:14752053). Interacts with CLOCK and BMAL1 (PubMed:20861012). Interacts with IFI204 (By similarity). Interacts with NEDD9/HEF1 (PubMed:10502414). Interacts with ASB4; this interaction promotes ID2 proteasomal degradation (PubMed:24586788).</text>
</comment>
<comment type="interaction">
    <interactant intactId="EBI-713450">
        <id>Q02363</id>
    </interactant>
    <interactant intactId="EBI-10254793">
        <id>Q6XD76</id>
        <label>ASCL4</label>
    </interactant>
    <organismsDiffer>false</organismsDiffer>
    <experiments>4</experiments>
</comment>
<comment type="interaction">
    <interactant intactId="EBI-713450">
        <id>Q02363</id>
    </interactant>
    <interactant intactId="EBI-7317823">
        <id>Q6P5X5</id>
        <label>C22orf39</label>
    </interactant>
    <organismsDiffer>false</organismsDiffer>
    <experiments>3</experiments>
</comment>
<comment type="interaction">
    <interactant intactId="EBI-713450">
        <id>Q02363</id>
    </interactant>
    <interactant intactId="EBI-748961">
        <id>O95273</id>
        <label>CCNDBP1</label>
    </interactant>
    <organismsDiffer>false</organismsDiffer>
    <experiments>4</experiments>
</comment>
<comment type="interaction">
    <interactant intactId="EBI-713450">
        <id>Q02363</id>
    </interactant>
    <interactant intactId="EBI-744099">
        <id>Q9H0I2</id>
        <label>ENKD1</label>
    </interactant>
    <organismsDiffer>false</organismsDiffer>
    <experiments>3</experiments>
</comment>
<comment type="interaction">
    <interactant intactId="EBI-713450">
        <id>Q02363</id>
    </interactant>
    <interactant intactId="EBI-2339898">
        <id>Q9NW38</id>
        <label>FANCL</label>
    </interactant>
    <organismsDiffer>false</organismsDiffer>
    <experiments>3</experiments>
</comment>
<comment type="interaction">
    <interactant intactId="EBI-713450">
        <id>Q02363</id>
    </interactant>
    <interactant intactId="EBI-25852941">
        <id>P11362-2</id>
        <label>FGFR1</label>
    </interactant>
    <organismsDiffer>false</organismsDiffer>
    <experiments>3</experiments>
</comment>
<comment type="interaction">
    <interactant intactId="EBI-713450">
        <id>Q02363</id>
    </interactant>
    <interactant intactId="EBI-744935">
        <id>Q9BVV2</id>
        <label>FNDC11</label>
    </interactant>
    <organismsDiffer>false</organismsDiffer>
    <experiments>3</experiments>
</comment>
<comment type="interaction">
    <interactant intactId="EBI-713450">
        <id>Q02363</id>
    </interactant>
    <interactant intactId="EBI-725515">
        <id>O43559</id>
        <label>FRS3</label>
    </interactant>
    <organismsDiffer>false</organismsDiffer>
    <experiments>3</experiments>
</comment>
<comment type="interaction">
    <interactant intactId="EBI-713450">
        <id>Q02363</id>
    </interactant>
    <interactant intactId="EBI-8561769">
        <id>Q5SUL5</id>
        <label>HLA-A</label>
    </interactant>
    <organismsDiffer>false</organismsDiffer>
    <experiments>3</experiments>
</comment>
<comment type="interaction">
    <interactant intactId="EBI-713450">
        <id>Q02363</id>
    </interactant>
    <interactant intactId="EBI-517086">
        <id>O43464</id>
        <label>HTRA2</label>
    </interactant>
    <organismsDiffer>false</organismsDiffer>
    <experiments>3</experiments>
</comment>
<comment type="interaction">
    <interactant intactId="EBI-713450">
        <id>Q02363</id>
    </interactant>
    <interactant intactId="EBI-466029">
        <id>P42858</id>
        <label>HTT</label>
    </interactant>
    <organismsDiffer>false</organismsDiffer>
    <experiments>6</experiments>
</comment>
<comment type="interaction">
    <interactant intactId="EBI-713450">
        <id>Q02363</id>
    </interactant>
    <interactant intactId="EBI-399080">
        <id>Q92993</id>
        <label>KAT5</label>
    </interactant>
    <organismsDiffer>false</organismsDiffer>
    <experiments>3</experiments>
</comment>
<comment type="interaction">
    <interactant intactId="EBI-713450">
        <id>Q02363</id>
    </interactant>
    <interactant intactId="EBI-11742507">
        <id>Q8TAP4-4</id>
        <label>LMO3</label>
    </interactant>
    <organismsDiffer>false</organismsDiffer>
    <experiments>3</experiments>
</comment>
<comment type="interaction">
    <interactant intactId="EBI-713450">
        <id>Q02363</id>
    </interactant>
    <interactant intactId="EBI-11991020">
        <id>A6NI15</id>
        <label>MSGN1</label>
    </interactant>
    <organismsDiffer>false</organismsDiffer>
    <experiments>3</experiments>
</comment>
<comment type="interaction">
    <interactant intactId="EBI-713450">
        <id>Q02363</id>
    </interactant>
    <interactant intactId="EBI-751267">
        <id>Q96HC4</id>
        <label>PDLIM5</label>
    </interactant>
    <organismsDiffer>false</organismsDiffer>
    <experiments>5</experiments>
</comment>
<comment type="interaction">
    <interactant intactId="EBI-713450">
        <id>Q02363</id>
    </interactant>
    <interactant intactId="EBI-79165">
        <id>Q9NRD5</id>
        <label>PICK1</label>
    </interactant>
    <organismsDiffer>false</organismsDiffer>
    <experiments>3</experiments>
</comment>
<comment type="interaction">
    <interactant intactId="EBI-713450">
        <id>Q02363</id>
    </interactant>
    <interactant intactId="EBI-7813714">
        <id>Q13563</id>
        <label>PKD2</label>
    </interactant>
    <organismsDiffer>false</organismsDiffer>
    <experiments>7</experiments>
</comment>
<comment type="interaction">
    <interactant intactId="EBI-713450">
        <id>Q02363</id>
    </interactant>
    <interactant intactId="EBI-50433196">
        <id>A0A6Q8PF08</id>
        <label>PMP22</label>
    </interactant>
    <organismsDiffer>false</organismsDiffer>
    <experiments>3</experiments>
</comment>
<comment type="interaction">
    <interactant intactId="EBI-713450">
        <id>Q02363</id>
    </interactant>
    <interactant intactId="EBI-25884072">
        <id>P62937-2</id>
        <label>PPIA</label>
    </interactant>
    <organismsDiffer>false</organismsDiffer>
    <experiments>3</experiments>
</comment>
<comment type="interaction">
    <interactant intactId="EBI-713450">
        <id>Q02363</id>
    </interactant>
    <interactant intactId="EBI-359252">
        <id>P23284</id>
        <label>PPIB</label>
    </interactant>
    <organismsDiffer>false</organismsDiffer>
    <experiments>3</experiments>
</comment>
<comment type="interaction">
    <interactant intactId="EBI-713450">
        <id>Q02363</id>
    </interactant>
    <interactant intactId="EBI-1383528">
        <id>P17252</id>
        <label>PRKCA</label>
    </interactant>
    <organismsDiffer>false</organismsDiffer>
    <experiments>3</experiments>
</comment>
<comment type="interaction">
    <interactant intactId="EBI-713450">
        <id>Q02363</id>
    </interactant>
    <interactant intactId="EBI-9090795">
        <id>Q15047-2</id>
        <label>SETDB1</label>
    </interactant>
    <organismsDiffer>false</organismsDiffer>
    <experiments>3</experiments>
</comment>
<comment type="interaction">
    <interactant intactId="EBI-713450">
        <id>Q02363</id>
    </interactant>
    <interactant intactId="EBI-372899">
        <id>Q13148</id>
        <label>TARDBP</label>
    </interactant>
    <organismsDiffer>false</organismsDiffer>
    <experiments>6</experiments>
</comment>
<comment type="interaction">
    <interactant intactId="EBI-713450">
        <id>Q02363</id>
    </interactant>
    <interactant intactId="EBI-722877">
        <id>Q99081</id>
        <label>TCF12</label>
    </interactant>
    <organismsDiffer>false</organismsDiffer>
    <experiments>3</experiments>
</comment>
<comment type="interaction">
    <interactant intactId="EBI-713450">
        <id>Q02363</id>
    </interactant>
    <interactant intactId="EBI-769630">
        <id>P15923</id>
        <label>TCF3</label>
    </interactant>
    <organismsDiffer>false</organismsDiffer>
    <experiments>2</experiments>
</comment>
<comment type="interaction">
    <interactant intactId="EBI-713450">
        <id>Q02363</id>
    </interactant>
    <interactant intactId="EBI-769645">
        <id>P15923-1</id>
        <label>TCF3</label>
    </interactant>
    <organismsDiffer>false</organismsDiffer>
    <experiments>3</experiments>
</comment>
<comment type="interaction">
    <interactant intactId="EBI-713450">
        <id>Q02363</id>
    </interactant>
    <interactant intactId="EBI-533224">
        <id>P15884</id>
        <label>TCF4</label>
    </interactant>
    <organismsDiffer>false</organismsDiffer>
    <experiments>4</experiments>
</comment>
<comment type="interaction">
    <interactant intactId="EBI-713450">
        <id>Q02363</id>
    </interactant>
    <interactant intactId="EBI-740781">
        <id>Q9BT92</id>
        <label>TCHP</label>
    </interactant>
    <organismsDiffer>false</organismsDiffer>
    <experiments>3</experiments>
</comment>
<comment type="interaction">
    <interactant intactId="EBI-713450">
        <id>Q02363</id>
    </interactant>
    <interactant intactId="EBI-359832">
        <id>P61981</id>
        <label>YWHAG</label>
    </interactant>
    <organismsDiffer>false</organismsDiffer>
    <experiments>3</experiments>
</comment>
<comment type="subcellular location">
    <subcellularLocation>
        <location evidence="2">Cytoplasm</location>
    </subcellularLocation>
    <subcellularLocation>
        <location evidence="2">Nucleus</location>
    </subcellularLocation>
</comment>
<comment type="tissue specificity">
    <text>Highly expressed in early fetal tissues, including those of the central nervous system.</text>
</comment>
<comment type="developmental stage">
    <text>Found in most early fetal tissues but not in the corresponding mature tissues.</text>
</comment>
<comment type="domain">
    <text evidence="1">The bHLH domain is essential for its repressor activity towards the CLOCK-BMAL1 heterodimer.</text>
</comment>
<comment type="PTM">
    <text evidence="8">Ubiquitinated in a ASB4-depedent manner, leading to proteasomal degradation.</text>
</comment>
<comment type="PTM">
    <text evidence="3">Phosphorylated in vitro by CDK1, PKA and PKC.</text>
</comment>